<reference key="1">
    <citation type="journal article" date="1996" name="Science">
        <title>Cold-induced expression of delta 9-desaturase in carp by transcriptional and posttranslational mechanisms.</title>
        <authorList>
            <person name="Tiku P.E."/>
            <person name="Gracey A.Y."/>
            <person name="Macartney A.I."/>
            <person name="Beynon R.J."/>
            <person name="Cossins A.R."/>
        </authorList>
    </citation>
    <scope>NUCLEOTIDE SEQUENCE [MRNA]</scope>
    <scope>INDUCTION</scope>
    <source>
        <tissue>Liver</tissue>
    </source>
</reference>
<reference key="2">
    <citation type="submission" date="1999-09" db="EMBL/GenBank/DDBJ databases">
        <authorList>
            <person name="Tiku P.E."/>
        </authorList>
    </citation>
    <scope>SEQUENCE REVISION TO 11-25 AND C-TERMINUS</scope>
</reference>
<dbReference type="EC" id="1.14.19.1" evidence="2"/>
<dbReference type="EMBL" id="U31864">
    <property type="protein sequence ID" value="AAB03857.2"/>
    <property type="molecule type" value="mRNA"/>
</dbReference>
<dbReference type="SMR" id="Q92038"/>
<dbReference type="OrthoDB" id="9988030at2759"/>
<dbReference type="Proteomes" id="UP000694384">
    <property type="component" value="Unplaced"/>
</dbReference>
<dbReference type="Proteomes" id="UP000694427">
    <property type="component" value="Unplaced"/>
</dbReference>
<dbReference type="Proteomes" id="UP000694700">
    <property type="component" value="Unplaced"/>
</dbReference>
<dbReference type="Proteomes" id="UP000694701">
    <property type="component" value="Unplaced"/>
</dbReference>
<dbReference type="Proteomes" id="UP001155660">
    <property type="component" value="Unplaced"/>
</dbReference>
<dbReference type="GO" id="GO:0005789">
    <property type="term" value="C:endoplasmic reticulum membrane"/>
    <property type="evidence" value="ECO:0000250"/>
    <property type="project" value="UniProtKB"/>
</dbReference>
<dbReference type="GO" id="GO:0016020">
    <property type="term" value="C:membrane"/>
    <property type="evidence" value="ECO:0000250"/>
    <property type="project" value="UniProtKB"/>
</dbReference>
<dbReference type="GO" id="GO:0005506">
    <property type="term" value="F:iron ion binding"/>
    <property type="evidence" value="ECO:0000250"/>
    <property type="project" value="UniProtKB"/>
</dbReference>
<dbReference type="GO" id="GO:0016491">
    <property type="term" value="F:oxidoreductase activity"/>
    <property type="evidence" value="ECO:0000250"/>
    <property type="project" value="UniProtKB"/>
</dbReference>
<dbReference type="GO" id="GO:0032896">
    <property type="term" value="F:palmitoyl-CoA 9-desaturase activity"/>
    <property type="evidence" value="ECO:0007669"/>
    <property type="project" value="TreeGrafter"/>
</dbReference>
<dbReference type="GO" id="GO:0004768">
    <property type="term" value="F:stearoyl-CoA 9-desaturase activity"/>
    <property type="evidence" value="ECO:0000250"/>
    <property type="project" value="UniProtKB"/>
</dbReference>
<dbReference type="GO" id="GO:1903966">
    <property type="term" value="P:monounsaturated fatty acid biosynthetic process"/>
    <property type="evidence" value="ECO:0007669"/>
    <property type="project" value="TreeGrafter"/>
</dbReference>
<dbReference type="GO" id="GO:0070542">
    <property type="term" value="P:response to fatty acid"/>
    <property type="evidence" value="ECO:0007669"/>
    <property type="project" value="TreeGrafter"/>
</dbReference>
<dbReference type="GO" id="GO:0006636">
    <property type="term" value="P:unsaturated fatty acid biosynthetic process"/>
    <property type="evidence" value="ECO:0000250"/>
    <property type="project" value="UniProtKB"/>
</dbReference>
<dbReference type="CDD" id="cd03505">
    <property type="entry name" value="Delta9-FADS-like"/>
    <property type="match status" value="1"/>
</dbReference>
<dbReference type="InterPro" id="IPR015876">
    <property type="entry name" value="Acyl-CoA_DS"/>
</dbReference>
<dbReference type="InterPro" id="IPR005804">
    <property type="entry name" value="FA_desaturase_dom"/>
</dbReference>
<dbReference type="InterPro" id="IPR001522">
    <property type="entry name" value="FADS-1_CS"/>
</dbReference>
<dbReference type="PANTHER" id="PTHR11351">
    <property type="entry name" value="ACYL-COA DESATURASE"/>
    <property type="match status" value="1"/>
</dbReference>
<dbReference type="PANTHER" id="PTHR11351:SF102">
    <property type="entry name" value="STEAROYL-COA DESATURASE"/>
    <property type="match status" value="1"/>
</dbReference>
<dbReference type="Pfam" id="PF00487">
    <property type="entry name" value="FA_desaturase"/>
    <property type="match status" value="1"/>
</dbReference>
<dbReference type="PRINTS" id="PR00075">
    <property type="entry name" value="FACDDSATRASE"/>
</dbReference>
<dbReference type="PROSITE" id="PS00476">
    <property type="entry name" value="FATTY_ACID_DESATUR_1"/>
    <property type="match status" value="1"/>
</dbReference>
<keyword id="KW-0256">Endoplasmic reticulum</keyword>
<keyword id="KW-0275">Fatty acid biosynthesis</keyword>
<keyword id="KW-0276">Fatty acid metabolism</keyword>
<keyword id="KW-0408">Iron</keyword>
<keyword id="KW-0444">Lipid biosynthesis</keyword>
<keyword id="KW-0443">Lipid metabolism</keyword>
<keyword id="KW-0472">Membrane</keyword>
<keyword id="KW-0479">Metal-binding</keyword>
<keyword id="KW-0560">Oxidoreductase</keyword>
<keyword id="KW-1185">Reference proteome</keyword>
<keyword id="KW-0346">Stress response</keyword>
<keyword id="KW-0812">Transmembrane</keyword>
<keyword id="KW-1133">Transmembrane helix</keyword>
<protein>
    <recommendedName>
        <fullName>Acyl-CoA desaturase</fullName>
        <ecNumber evidence="2">1.14.19.1</ecNumber>
    </recommendedName>
    <alternativeName>
        <fullName>Delta(9)-desaturase</fullName>
        <shortName evidence="4">Delta-9 desaturase</shortName>
    </alternativeName>
    <alternativeName>
        <fullName>Fatty acid desaturase</fullName>
    </alternativeName>
    <alternativeName>
        <fullName>Stearoyl-CoA desaturase</fullName>
    </alternativeName>
</protein>
<comment type="function">
    <text evidence="2">Stearoyl-CoA desaturase that utilizes O(2) and electrons from reduced cytochrome b5 to introduce the first double bond into saturated fatty acyl-CoA substrates. Has high specificity and catalyzes the insertion of a cis double bond at the delta-9 position into fatty acyl-CoA substrates including palmitoyl-CoA and stearoyl-CoA. Contributes to the biosynthesis of membrane phospholipids, cholesterol esters and triglycerides.</text>
</comment>
<comment type="catalytic activity">
    <reaction evidence="2">
        <text>octadecanoyl-CoA + 2 Fe(II)-[cytochrome b5] + O2 + 2 H(+) = (9Z)-octadecenoyl-CoA + 2 Fe(III)-[cytochrome b5] + 2 H2O</text>
        <dbReference type="Rhea" id="RHEA:19721"/>
        <dbReference type="Rhea" id="RHEA-COMP:10438"/>
        <dbReference type="Rhea" id="RHEA-COMP:10439"/>
        <dbReference type="ChEBI" id="CHEBI:15377"/>
        <dbReference type="ChEBI" id="CHEBI:15378"/>
        <dbReference type="ChEBI" id="CHEBI:15379"/>
        <dbReference type="ChEBI" id="CHEBI:29033"/>
        <dbReference type="ChEBI" id="CHEBI:29034"/>
        <dbReference type="ChEBI" id="CHEBI:57387"/>
        <dbReference type="ChEBI" id="CHEBI:57394"/>
        <dbReference type="EC" id="1.14.19.1"/>
    </reaction>
</comment>
<comment type="cofactor">
    <cofactor evidence="2">
        <name>Fe(2+)</name>
        <dbReference type="ChEBI" id="CHEBI:29033"/>
    </cofactor>
    <text evidence="2">Expected to bind 2 Fe(2+) ions per subunit.</text>
</comment>
<comment type="subcellular location">
    <subcellularLocation>
        <location evidence="1">Endoplasmic reticulum membrane</location>
        <topology evidence="5">Multi-pass membrane protein</topology>
    </subcellularLocation>
</comment>
<comment type="induction">
    <text evidence="3">By cold. A 10-fold increase in transcript levels is observed 48-60 hours after cooling.</text>
</comment>
<comment type="domain">
    <text evidence="1">The histidine box domains are involved in binding the catalytic metal ions.</text>
</comment>
<comment type="similarity">
    <text evidence="5">Belongs to the fatty acid desaturase type 1 family.</text>
</comment>
<proteinExistence type="evidence at transcript level"/>
<feature type="chain" id="PRO_0000185403" description="Acyl-CoA desaturase">
    <location>
        <begin position="1"/>
        <end position="327"/>
    </location>
</feature>
<feature type="topological domain" description="Cytoplasmic" evidence="1">
    <location>
        <begin position="1"/>
        <end position="39"/>
    </location>
</feature>
<feature type="transmembrane region" description="Helical" evidence="1">
    <location>
        <begin position="40"/>
        <end position="60"/>
    </location>
</feature>
<feature type="topological domain" description="Lumenal" evidence="1">
    <location>
        <begin position="61"/>
        <end position="64"/>
    </location>
</feature>
<feature type="transmembrane region" description="Helical" evidence="1">
    <location>
        <begin position="65"/>
        <end position="85"/>
    </location>
</feature>
<feature type="topological domain" description="Cytoplasmic" evidence="1">
    <location>
        <begin position="86"/>
        <end position="184"/>
    </location>
</feature>
<feature type="transmembrane region" description="Helical" evidence="1">
    <location>
        <begin position="185"/>
        <end position="204"/>
    </location>
</feature>
<feature type="topological domain" description="Lumenal" evidence="1">
    <location>
        <begin position="205"/>
        <end position="208"/>
    </location>
</feature>
<feature type="transmembrane region" description="Helical" evidence="1">
    <location>
        <begin position="209"/>
        <end position="230"/>
    </location>
</feature>
<feature type="topological domain" description="Cytoplasmic" evidence="1">
    <location>
        <begin position="231"/>
        <end position="327"/>
    </location>
</feature>
<feature type="short sequence motif" description="Histidine box-1" evidence="5">
    <location>
        <begin position="87"/>
        <end position="92"/>
    </location>
</feature>
<feature type="short sequence motif" description="Histidine box-2" evidence="5">
    <location>
        <begin position="124"/>
        <end position="128"/>
    </location>
</feature>
<feature type="short sequence motif" description="Histidine box-3" evidence="5">
    <location>
        <begin position="265"/>
        <end position="269"/>
    </location>
</feature>
<feature type="binding site" evidence="1">
    <location>
        <position position="42"/>
    </location>
    <ligand>
        <name>substrate</name>
    </ligand>
</feature>
<feature type="binding site" evidence="2">
    <location>
        <position position="87"/>
    </location>
    <ligand>
        <name>Fe cation</name>
        <dbReference type="ChEBI" id="CHEBI:24875"/>
        <label>1</label>
    </ligand>
</feature>
<feature type="binding site" evidence="2">
    <location>
        <position position="92"/>
    </location>
    <ligand>
        <name>Fe cation</name>
        <dbReference type="ChEBI" id="CHEBI:24875"/>
        <label>1</label>
    </ligand>
</feature>
<feature type="binding site" evidence="1">
    <location>
        <position position="115"/>
    </location>
    <ligand>
        <name>substrate</name>
    </ligand>
</feature>
<feature type="binding site" evidence="1">
    <location>
        <position position="122"/>
    </location>
    <ligand>
        <name>substrate</name>
    </ligand>
</feature>
<feature type="binding site" evidence="1">
    <location>
        <position position="123"/>
    </location>
    <ligand>
        <name>substrate</name>
    </ligand>
</feature>
<feature type="binding site" evidence="2">
    <location>
        <position position="124"/>
    </location>
    <ligand>
        <name>Fe cation</name>
        <dbReference type="ChEBI" id="CHEBI:24875"/>
        <label>1</label>
    </ligand>
</feature>
<feature type="binding site" evidence="2">
    <location>
        <position position="127"/>
    </location>
    <ligand>
        <name>Fe cation</name>
        <dbReference type="ChEBI" id="CHEBI:24875"/>
        <label>2</label>
    </ligand>
</feature>
<feature type="binding site" evidence="2">
    <location>
        <position position="128"/>
    </location>
    <ligand>
        <name>Fe cation</name>
        <dbReference type="ChEBI" id="CHEBI:24875"/>
        <label>1</label>
    </ligand>
</feature>
<feature type="binding site" evidence="1">
    <location>
        <position position="155"/>
    </location>
    <ligand>
        <name>substrate</name>
    </ligand>
</feature>
<feature type="binding site" evidence="1">
    <location>
        <position position="156"/>
    </location>
    <ligand>
        <name>substrate</name>
    </ligand>
</feature>
<feature type="binding site" evidence="1">
    <location>
        <position position="229"/>
    </location>
    <ligand>
        <name>substrate</name>
    </ligand>
</feature>
<feature type="binding site" evidence="2">
    <location>
        <position position="236"/>
    </location>
    <ligand>
        <name>Fe cation</name>
        <dbReference type="ChEBI" id="CHEBI:24875"/>
        <label>2</label>
    </ligand>
</feature>
<feature type="binding site" evidence="2">
    <location>
        <position position="265"/>
    </location>
    <ligand>
        <name>Fe cation</name>
        <dbReference type="ChEBI" id="CHEBI:24875"/>
        <label>2</label>
    </ligand>
</feature>
<feature type="binding site" evidence="2">
    <location>
        <position position="268"/>
    </location>
    <ligand>
        <name>Fe cation</name>
        <dbReference type="ChEBI" id="CHEBI:24875"/>
        <label>1</label>
    </ligand>
</feature>
<feature type="binding site" evidence="2">
    <location>
        <position position="269"/>
    </location>
    <ligand>
        <name>Fe cation</name>
        <dbReference type="ChEBI" id="CHEBI:24875"/>
        <label>2</label>
    </ligand>
</feature>
<evidence type="ECO:0000250" key="1">
    <source>
        <dbReference type="UniProtKB" id="O00767"/>
    </source>
</evidence>
<evidence type="ECO:0000250" key="2">
    <source>
        <dbReference type="UniProtKB" id="P13516"/>
    </source>
</evidence>
<evidence type="ECO:0000269" key="3">
    <source>
    </source>
</evidence>
<evidence type="ECO:0000303" key="4">
    <source>
    </source>
</evidence>
<evidence type="ECO:0000305" key="5"/>
<name>ACOD_CYPCA</name>
<organism>
    <name type="scientific">Cyprinus carpio</name>
    <name type="common">Common carp</name>
    <dbReference type="NCBI Taxonomy" id="7962"/>
    <lineage>
        <taxon>Eukaryota</taxon>
        <taxon>Metazoa</taxon>
        <taxon>Chordata</taxon>
        <taxon>Craniata</taxon>
        <taxon>Vertebrata</taxon>
        <taxon>Euteleostomi</taxon>
        <taxon>Actinopterygii</taxon>
        <taxon>Neopterygii</taxon>
        <taxon>Teleostei</taxon>
        <taxon>Ostariophysi</taxon>
        <taxon>Cypriniformes</taxon>
        <taxon>Cyprinidae</taxon>
        <taxon>Cyprininae</taxon>
        <taxon>Cyprinus</taxon>
    </lineage>
</organism>
<accession>Q92038</accession>
<sequence>MPDREIKSPIWHPEPGTVEDVFDHTYKEKEGPKPPTVIVWRNVILMSLLHLGALYGLFLFPSARALTWIWFFGCLLFSALGITAGAHRLWSHRSYKASLPLQIFLALGNSMAFQNDIYEWSRDHRVHHKYSETDADPHNAVRGFFFSHVGWLLVRKHPDVIEKGRKLELSDLKADKVVMFQRRFYKPSVLLMCFFVPTFVPWYVWGESLWVAYFVPALLRYALVLNATWLVNSAAHMWGNRPYDSSINPRENRFVTFSAIGEGFHNYHHTFPFDYATSEFGCKLNLTTCCFIDLMCFLGLAREPKRVSREAVLARAQRTGDGSHWSG</sequence>